<proteinExistence type="evidence at protein level"/>
<comment type="function">
    <text evidence="4">Nonribosomal peptide synthetase; part of the gene cluster that mediates the biosynthesis of astellolides, drimane-type sesquiterpene esters that show antimicrobial, anti-inflammatory, and anti-tumor activities (PubMed:27628599). The first step in astellolide biosynthesis is performed by the sesquiterpene cyclase astC that catalyzes the formation of drimanyl pyrophosphate from farnesyl pyrophosphate (PubMed:27628599). Drimanyl pyrophosphate is then dephosphorylated by the sesquiterpene phosphatase astI to produce drimanyl monophosphate which is further dephosphorylated to drim-8-ene-11-ol by atsK (PubMed:27628599). Drim-8-ene-11-ol is converted to confertifolin, probably by the cytochrome P450 monooxygenase astD and/or the dehydrogenase astE (PubMed:27628599). The cytochrome P450 monooxygenases astB, astF and astJ then hydroxylate confertifolin at C6, C14, or C15 to form trihydroxy confertifolin (PubMed:27628599). The nonribosomal peptide synthetase astA catalyzes ester bond formation between trihydroxy contifolin and benzoic acid (BA) or 4-hydroxy benzoic acid (4HBA), leading to the formation of dideacetyl astellolides A and B, respectively (PubMed:27628599). Finally, the O-acetyltransferase astG converts dideacetyl astellolides A and B into deacetyl astellolides A and B (PubMed:27628599).</text>
</comment>
<comment type="catalytic activity">
    <reaction evidence="4">
        <text>7beta,14,16-trihydroxyconfertifolin + benzoate + H(+) = dideacetyl astellolide A + H2O</text>
        <dbReference type="Rhea" id="RHEA:81067"/>
        <dbReference type="ChEBI" id="CHEBI:15377"/>
        <dbReference type="ChEBI" id="CHEBI:15378"/>
        <dbReference type="ChEBI" id="CHEBI:16150"/>
        <dbReference type="ChEBI" id="CHEBI:231784"/>
        <dbReference type="ChEBI" id="CHEBI:231786"/>
    </reaction>
    <physiologicalReaction direction="left-to-right" evidence="4">
        <dbReference type="Rhea" id="RHEA:81068"/>
    </physiologicalReaction>
</comment>
<comment type="catalytic activity">
    <reaction evidence="4">
        <text>7beta,14,16-trihydroxyconfertifolin + 4-hydroxybenzoate + H(+) = dideacetyl astellolide B + H2O</text>
        <dbReference type="Rhea" id="RHEA:81071"/>
        <dbReference type="ChEBI" id="CHEBI:15377"/>
        <dbReference type="ChEBI" id="CHEBI:15378"/>
        <dbReference type="ChEBI" id="CHEBI:17879"/>
        <dbReference type="ChEBI" id="CHEBI:231784"/>
        <dbReference type="ChEBI" id="CHEBI:231785"/>
    </reaction>
    <physiologicalReaction direction="left-to-right" evidence="4">
        <dbReference type="Rhea" id="RHEA:81072"/>
    </physiologicalReaction>
</comment>
<comment type="pathway">
    <text evidence="4">Secondary metabolite biosynthesis; terpenoid biosynthesis.</text>
</comment>
<comment type="induction">
    <text evidence="4">Expression is regulated by the secondary metabolite regulator cclA.</text>
</comment>
<comment type="domain">
    <text evidence="7">NRP synthetases are composed of discrete domains (adenylation (A), thiolation (T) or peptidyl carrier protein (PCP) and condensation (C) domains) which when grouped together are referred to as a single module. Each module is responsible for the recognition (via the A domain) and incorporation of a single amino acid into the growing peptide product. Thus, an NRP synthetase is generally composed of one or more modules and can terminate in a thioesterase domain (TE) that releases the newly synthesized peptide from the enzyme. Occasionally, epimerase (E) domains (responsible for L- to D- amino acid conversion) are present within the NRP synthetase. AsrA has the following single module architecture: A-T-C.</text>
</comment>
<comment type="disruption phenotype">
    <text evidence="4">Impairs the production of deacetyl astellolides A and B and leads to the accumulation of trihydroxy confertifolin.</text>
</comment>
<comment type="similarity">
    <text evidence="6">Belongs to the NRP synthetase family.</text>
</comment>
<protein>
    <recommendedName>
        <fullName evidence="5">Nonribosomal peptide synthetase astA</fullName>
        <ecNumber evidence="4">6.3.2.-</ecNumber>
    </recommendedName>
    <alternativeName>
        <fullName evidence="5">Astellolide biosynthesis cluster protein A</fullName>
    </alternativeName>
</protein>
<evidence type="ECO:0000255" key="1"/>
<evidence type="ECO:0000255" key="2">
    <source>
        <dbReference type="PROSITE-ProRule" id="PRU00258"/>
    </source>
</evidence>
<evidence type="ECO:0000256" key="3">
    <source>
        <dbReference type="SAM" id="MobiDB-lite"/>
    </source>
</evidence>
<evidence type="ECO:0000269" key="4">
    <source>
    </source>
</evidence>
<evidence type="ECO:0000303" key="5">
    <source>
    </source>
</evidence>
<evidence type="ECO:0000305" key="6"/>
<evidence type="ECO:0000305" key="7">
    <source>
    </source>
</evidence>
<name>ASTA_ASPOR</name>
<reference key="1">
    <citation type="journal article" date="2005" name="Nature">
        <title>Genome sequencing and analysis of Aspergillus oryzae.</title>
        <authorList>
            <person name="Machida M."/>
            <person name="Asai K."/>
            <person name="Sano M."/>
            <person name="Tanaka T."/>
            <person name="Kumagai T."/>
            <person name="Terai G."/>
            <person name="Kusumoto K."/>
            <person name="Arima T."/>
            <person name="Akita O."/>
            <person name="Kashiwagi Y."/>
            <person name="Abe K."/>
            <person name="Gomi K."/>
            <person name="Horiuchi H."/>
            <person name="Kitamoto K."/>
            <person name="Kobayashi T."/>
            <person name="Takeuchi M."/>
            <person name="Denning D.W."/>
            <person name="Galagan J.E."/>
            <person name="Nierman W.C."/>
            <person name="Yu J."/>
            <person name="Archer D.B."/>
            <person name="Bennett J.W."/>
            <person name="Bhatnagar D."/>
            <person name="Cleveland T.E."/>
            <person name="Fedorova N.D."/>
            <person name="Gotoh O."/>
            <person name="Horikawa H."/>
            <person name="Hosoyama A."/>
            <person name="Ichinomiya M."/>
            <person name="Igarashi R."/>
            <person name="Iwashita K."/>
            <person name="Juvvadi P.R."/>
            <person name="Kato M."/>
            <person name="Kato Y."/>
            <person name="Kin T."/>
            <person name="Kokubun A."/>
            <person name="Maeda H."/>
            <person name="Maeyama N."/>
            <person name="Maruyama J."/>
            <person name="Nagasaki H."/>
            <person name="Nakajima T."/>
            <person name="Oda K."/>
            <person name="Okada K."/>
            <person name="Paulsen I."/>
            <person name="Sakamoto K."/>
            <person name="Sawano T."/>
            <person name="Takahashi M."/>
            <person name="Takase K."/>
            <person name="Terabayashi Y."/>
            <person name="Wortman J.R."/>
            <person name="Yamada O."/>
            <person name="Yamagata Y."/>
            <person name="Anazawa H."/>
            <person name="Hata Y."/>
            <person name="Koide Y."/>
            <person name="Komori T."/>
            <person name="Koyama Y."/>
            <person name="Minetoki T."/>
            <person name="Suharnan S."/>
            <person name="Tanaka A."/>
            <person name="Isono K."/>
            <person name="Kuhara S."/>
            <person name="Ogasawara N."/>
            <person name="Kikuchi H."/>
        </authorList>
    </citation>
    <scope>NUCLEOTIDE SEQUENCE [LARGE SCALE GENOMIC DNA]</scope>
    <source>
        <strain>ATCC 42149 / RIB 40</strain>
    </source>
</reference>
<reference key="2">
    <citation type="journal article" date="2016" name="Sci. Rep.">
        <title>Identification of a novel sesquiterpene biosynthetic machinery involved in astellolide biosynthesis.</title>
        <authorList>
            <person name="Shinohara Y."/>
            <person name="Takahashi S."/>
            <person name="Osada H."/>
            <person name="Koyama Y."/>
        </authorList>
    </citation>
    <scope>INDUCTION</scope>
    <scope>FUNCTION</scope>
    <scope>DISRUPTION PHENOTYPE</scope>
    <scope>CATALYTIC ACTIVITY</scope>
    <scope>PATHWAY</scope>
</reference>
<feature type="chain" id="PRO_0000450113" description="Nonribosomal peptide synthetase astA">
    <location>
        <begin position="1"/>
        <end position="1338"/>
    </location>
</feature>
<feature type="domain" description="Carrier" evidence="2">
    <location>
        <begin position="820"/>
        <end position="893"/>
    </location>
</feature>
<feature type="region of interest" description="Disordered" evidence="3">
    <location>
        <begin position="22"/>
        <end position="52"/>
    </location>
</feature>
<feature type="region of interest" description="Adenylation" evidence="1">
    <location>
        <begin position="271"/>
        <end position="681"/>
    </location>
</feature>
<feature type="region of interest" description="Condensation" evidence="1">
    <location>
        <begin position="949"/>
        <end position="1336"/>
    </location>
</feature>
<feature type="modified residue" description="O-(pantetheine 4'-phosphoryl)serine" evidence="2">
    <location>
        <position position="854"/>
    </location>
</feature>
<accession>Q2UEK2</accession>
<dbReference type="EC" id="6.3.2.-" evidence="4"/>
<dbReference type="EMBL" id="BA000051">
    <property type="protein sequence ID" value="BAE60013.1"/>
    <property type="molecule type" value="Genomic_DNA"/>
</dbReference>
<dbReference type="RefSeq" id="XP_001822015.1">
    <property type="nucleotide sequence ID" value="XM_001821963.1"/>
</dbReference>
<dbReference type="SMR" id="Q2UEK2"/>
<dbReference type="STRING" id="510516.Q2UEK2"/>
<dbReference type="EnsemblFungi" id="BAE60013">
    <property type="protein sequence ID" value="BAE60013"/>
    <property type="gene ID" value="AO090026000585"/>
</dbReference>
<dbReference type="GeneID" id="5994043"/>
<dbReference type="KEGG" id="aor:AO090026000585"/>
<dbReference type="VEuPathDB" id="FungiDB:AO090026000585"/>
<dbReference type="HOGENOM" id="CLU_000022_60_3_1"/>
<dbReference type="OMA" id="QIENLAW"/>
<dbReference type="OrthoDB" id="84107at5052"/>
<dbReference type="UniPathway" id="UPA00213"/>
<dbReference type="Proteomes" id="UP000006564">
    <property type="component" value="Chromosome 3"/>
</dbReference>
<dbReference type="GO" id="GO:0005737">
    <property type="term" value="C:cytoplasm"/>
    <property type="evidence" value="ECO:0007669"/>
    <property type="project" value="TreeGrafter"/>
</dbReference>
<dbReference type="GO" id="GO:0016874">
    <property type="term" value="F:ligase activity"/>
    <property type="evidence" value="ECO:0007669"/>
    <property type="project" value="UniProtKB-KW"/>
</dbReference>
<dbReference type="GO" id="GO:0031177">
    <property type="term" value="F:phosphopantetheine binding"/>
    <property type="evidence" value="ECO:0007669"/>
    <property type="project" value="TreeGrafter"/>
</dbReference>
<dbReference type="GO" id="GO:0043041">
    <property type="term" value="P:amino acid activation for nonribosomal peptide biosynthetic process"/>
    <property type="evidence" value="ECO:0007669"/>
    <property type="project" value="TreeGrafter"/>
</dbReference>
<dbReference type="GO" id="GO:0044550">
    <property type="term" value="P:secondary metabolite biosynthetic process"/>
    <property type="evidence" value="ECO:0007669"/>
    <property type="project" value="TreeGrafter"/>
</dbReference>
<dbReference type="GO" id="GO:0016114">
    <property type="term" value="P:terpenoid biosynthetic process"/>
    <property type="evidence" value="ECO:0007669"/>
    <property type="project" value="UniProtKB-UniPathway"/>
</dbReference>
<dbReference type="CDD" id="cd05918">
    <property type="entry name" value="A_NRPS_SidN3_like"/>
    <property type="match status" value="1"/>
</dbReference>
<dbReference type="FunFam" id="3.30.300.30:FF:000015">
    <property type="entry name" value="Nonribosomal peptide synthase SidD"/>
    <property type="match status" value="1"/>
</dbReference>
<dbReference type="Gene3D" id="3.30.300.30">
    <property type="match status" value="1"/>
</dbReference>
<dbReference type="Gene3D" id="1.10.1200.10">
    <property type="entry name" value="ACP-like"/>
    <property type="match status" value="1"/>
</dbReference>
<dbReference type="Gene3D" id="3.30.559.10">
    <property type="entry name" value="Chloramphenicol acetyltransferase-like domain"/>
    <property type="match status" value="1"/>
</dbReference>
<dbReference type="Gene3D" id="3.40.50.12780">
    <property type="entry name" value="N-terminal domain of ligase-like"/>
    <property type="match status" value="1"/>
</dbReference>
<dbReference type="Gene3D" id="3.30.559.30">
    <property type="entry name" value="Nonribosomal peptide synthetase, condensation domain"/>
    <property type="match status" value="1"/>
</dbReference>
<dbReference type="InterPro" id="IPR036736">
    <property type="entry name" value="ACP-like_sf"/>
</dbReference>
<dbReference type="InterPro" id="IPR045851">
    <property type="entry name" value="AMP-bd_C_sf"/>
</dbReference>
<dbReference type="InterPro" id="IPR000873">
    <property type="entry name" value="AMP-dep_synth/lig_dom"/>
</dbReference>
<dbReference type="InterPro" id="IPR042099">
    <property type="entry name" value="ANL_N_sf"/>
</dbReference>
<dbReference type="InterPro" id="IPR023213">
    <property type="entry name" value="CAT-like_dom_sf"/>
</dbReference>
<dbReference type="InterPro" id="IPR001242">
    <property type="entry name" value="Condensatn"/>
</dbReference>
<dbReference type="InterPro" id="IPR009081">
    <property type="entry name" value="PP-bd_ACP"/>
</dbReference>
<dbReference type="PANTHER" id="PTHR45527">
    <property type="entry name" value="NONRIBOSOMAL PEPTIDE SYNTHETASE"/>
    <property type="match status" value="1"/>
</dbReference>
<dbReference type="PANTHER" id="PTHR45527:SF3">
    <property type="entry name" value="SIDEROPHORE SYNTHETASE (EUROFUNG)"/>
    <property type="match status" value="1"/>
</dbReference>
<dbReference type="Pfam" id="PF00501">
    <property type="entry name" value="AMP-binding"/>
    <property type="match status" value="1"/>
</dbReference>
<dbReference type="Pfam" id="PF00668">
    <property type="entry name" value="Condensation"/>
    <property type="match status" value="1"/>
</dbReference>
<dbReference type="Pfam" id="PF00550">
    <property type="entry name" value="PP-binding"/>
    <property type="match status" value="1"/>
</dbReference>
<dbReference type="SUPFAM" id="SSF56801">
    <property type="entry name" value="Acetyl-CoA synthetase-like"/>
    <property type="match status" value="1"/>
</dbReference>
<dbReference type="SUPFAM" id="SSF47336">
    <property type="entry name" value="ACP-like"/>
    <property type="match status" value="1"/>
</dbReference>
<dbReference type="SUPFAM" id="SSF52777">
    <property type="entry name" value="CoA-dependent acyltransferases"/>
    <property type="match status" value="2"/>
</dbReference>
<dbReference type="PROSITE" id="PS50075">
    <property type="entry name" value="CARRIER"/>
    <property type="match status" value="1"/>
</dbReference>
<keyword id="KW-0436">Ligase</keyword>
<keyword id="KW-0596">Phosphopantetheine</keyword>
<keyword id="KW-0597">Phosphoprotein</keyword>
<keyword id="KW-1185">Reference proteome</keyword>
<gene>
    <name evidence="5" type="primary">astA</name>
    <name type="ORF">AO090026000585</name>
</gene>
<sequence length="1338" mass="146209">MDLEPWGPLYRKQDQDGSLDNIAVVSGDIPSPHPKNEPSQTSTLHIPRDSDLDSDIPSVPTALIIAWGLTLSSLTGDEVVGFDLLPFRGDYQDLGARPYHFLLKFGYREWSREAATTGMDLGSASSEGLPQGMGNRPQIAPSRFRNVLIIKQCSDAPGDSGSLESPSLGNVDKDEPTDAFRADMFISIQCGIGRTGIDVHCSFDPAFWTSENIRMILLDLSRNFKEVMRCGRDDTPLTCLEGMSPKGLDCVLRRNIIPPPPKMEACVHHRFQARCRQNPSALAIDAWDGQLTYAELDSLSSQLASRLVSSITICPRGFMGVLMEKSAWVPVAILAVLKVGSAFVFLDGSQPLQRLKIICAETKSQLVLSSAHYREKANTLGPPVLLVEKNQSGLGQAKENDSCPSLLEDYPQPQSQPQDTLYAVFTSGSTGEPKGAMVDHGAFCTMCGPQMAARPTTNVSPRVFQFAPHAFTVSILDYLGTLLQGGCVCVPSEEELRNNMAGAIEGLSANIVTMTPSMARVLDPTQTPSLQLVLLAGEMMAQCDLDKWSQCVRLLSLYGQSENAAGSMISEKSIVPRAPNTFETLTPGFQCWIVSQDNPHRLMALGEVGELLLEGPALGQGYMNDPIQTEDKFICRSFCLEYAHSGSPQSYRLFKTGDLVRYTPAGEIELLGRKGAEVKLRGQRIDLTEIEHHLRCLFPSATRVVADVIIPSDDIDGLHPVLAAFVQVDSVSRTGQSAEATFASPRPEFRAEAKAVLSGLCQTIPSYMIPMTIIPTEAFPFTATGKLDRRSLRQYASAMSRSDLLKYVTDDRGPVVTAVTPVEIIIHDACVEALGVSSDKVGMLDSFPDLGGDSLAARRMVSICRTKGLELAVADILAHSSLTSLAEKCSAGGGGAKQISQGVEMLDPFSTAKEEFLSHLPSFLPNADMIADVFPVQGAQRRAARAIDTFIFRLSGPVDADRLRDACQVLQQAHLALRSIFVPFYGKFMQVVLRVPPLDFTRRLLPDGTDLVKWAESIGQADKTQRPPSEEFVVRFTLAETAGTPDYSIFMMRLSHAQYDAGCLARIISDLWAVYEQKQLVVKSDFAQYARRAVQQTHLLSMEAFWRDLLAGTTGLTPLPVTGISAEEERTIIVQQRVELKEPPPTGISMATVVRGAWSWVLHQQTGNTVVVFNEMLNGRDVVPLEDTEPVVGACHSIVPVCVHFPLPQSGRTPRELLSALQEQHLASLTFTTLDRDYLIQNCTEWTSHQSGFILAYQNFPEICDLVIGEDLSCQWASQVLDLAEPGEAWVTATPLPGALQISLRVSTAAMDEQEANAWISALGQTIIRFLDSPDSVL</sequence>
<organism>
    <name type="scientific">Aspergillus oryzae (strain ATCC 42149 / RIB 40)</name>
    <name type="common">Yellow koji mold</name>
    <dbReference type="NCBI Taxonomy" id="510516"/>
    <lineage>
        <taxon>Eukaryota</taxon>
        <taxon>Fungi</taxon>
        <taxon>Dikarya</taxon>
        <taxon>Ascomycota</taxon>
        <taxon>Pezizomycotina</taxon>
        <taxon>Eurotiomycetes</taxon>
        <taxon>Eurotiomycetidae</taxon>
        <taxon>Eurotiales</taxon>
        <taxon>Aspergillaceae</taxon>
        <taxon>Aspergillus</taxon>
        <taxon>Aspergillus subgen. Circumdati</taxon>
    </lineage>
</organism>